<dbReference type="EMBL" id="AB036421">
    <property type="protein sequence ID" value="BAA98020.1"/>
    <property type="molecule type" value="mRNA"/>
</dbReference>
<dbReference type="RefSeq" id="NP_620201.1">
    <property type="nucleotide sequence ID" value="NM_138846.1"/>
</dbReference>
<dbReference type="SMR" id="Q9JJK1"/>
<dbReference type="BioGRID" id="251339">
    <property type="interactions" value="2"/>
</dbReference>
<dbReference type="CORUM" id="Q9JJK1"/>
<dbReference type="FunCoup" id="Q9JJK1">
    <property type="interactions" value="1299"/>
</dbReference>
<dbReference type="IntAct" id="Q9JJK1">
    <property type="interactions" value="1"/>
</dbReference>
<dbReference type="STRING" id="10116.ENSRNOP00000070988"/>
<dbReference type="GlyCosmos" id="Q9JJK1">
    <property type="glycosylation" value="2 sites, No reported glycans"/>
</dbReference>
<dbReference type="GlyGen" id="Q9JJK1">
    <property type="glycosylation" value="2 sites"/>
</dbReference>
<dbReference type="PhosphoSitePlus" id="Q9JJK1"/>
<dbReference type="SwissPalm" id="Q9JJK1"/>
<dbReference type="PaxDb" id="10116-ENSRNOP00000006777"/>
<dbReference type="GeneID" id="192179"/>
<dbReference type="KEGG" id="rno:192179"/>
<dbReference type="UCSC" id="RGD:620580">
    <property type="organism name" value="rat"/>
</dbReference>
<dbReference type="AGR" id="RGD:620580"/>
<dbReference type="CTD" id="2824"/>
<dbReference type="RGD" id="620580">
    <property type="gene designation" value="Gpm6b"/>
</dbReference>
<dbReference type="eggNOG" id="KOG4800">
    <property type="taxonomic scope" value="Eukaryota"/>
</dbReference>
<dbReference type="InParanoid" id="Q9JJK1"/>
<dbReference type="OrthoDB" id="9993736at2759"/>
<dbReference type="PhylomeDB" id="Q9JJK1"/>
<dbReference type="PRO" id="PR:Q9JJK1"/>
<dbReference type="Proteomes" id="UP000002494">
    <property type="component" value="Unplaced"/>
</dbReference>
<dbReference type="GO" id="GO:0045121">
    <property type="term" value="C:membrane raft"/>
    <property type="evidence" value="ECO:0000250"/>
    <property type="project" value="UniProtKB"/>
</dbReference>
<dbReference type="GO" id="GO:0043209">
    <property type="term" value="C:myelin sheath"/>
    <property type="evidence" value="ECO:0000318"/>
    <property type="project" value="GO_Central"/>
</dbReference>
<dbReference type="GO" id="GO:0005886">
    <property type="term" value="C:plasma membrane"/>
    <property type="evidence" value="ECO:0000250"/>
    <property type="project" value="UniProtKB"/>
</dbReference>
<dbReference type="GO" id="GO:0019911">
    <property type="term" value="F:structural constituent of myelin sheath"/>
    <property type="evidence" value="ECO:0000318"/>
    <property type="project" value="GO_Central"/>
</dbReference>
<dbReference type="GO" id="GO:0061564">
    <property type="term" value="P:axon development"/>
    <property type="evidence" value="ECO:0000318"/>
    <property type="project" value="GO_Central"/>
</dbReference>
<dbReference type="GO" id="GO:0022010">
    <property type="term" value="P:central nervous system myelination"/>
    <property type="evidence" value="ECO:0000318"/>
    <property type="project" value="GO_Central"/>
</dbReference>
<dbReference type="GO" id="GO:0085029">
    <property type="term" value="P:extracellular matrix assembly"/>
    <property type="evidence" value="ECO:0000250"/>
    <property type="project" value="UniProtKB"/>
</dbReference>
<dbReference type="GO" id="GO:2000009">
    <property type="term" value="P:negative regulation of protein localization to cell surface"/>
    <property type="evidence" value="ECO:0000250"/>
    <property type="project" value="UniProtKB"/>
</dbReference>
<dbReference type="GO" id="GO:0051612">
    <property type="term" value="P:negative regulation of serotonin uptake"/>
    <property type="evidence" value="ECO:0000250"/>
    <property type="project" value="UniProtKB"/>
</dbReference>
<dbReference type="GO" id="GO:0001503">
    <property type="term" value="P:ossification"/>
    <property type="evidence" value="ECO:0007669"/>
    <property type="project" value="UniProtKB-KW"/>
</dbReference>
<dbReference type="GO" id="GO:0030501">
    <property type="term" value="P:positive regulation of bone mineralization"/>
    <property type="evidence" value="ECO:0000250"/>
    <property type="project" value="UniProtKB"/>
</dbReference>
<dbReference type="GO" id="GO:0015031">
    <property type="term" value="P:protein transport"/>
    <property type="evidence" value="ECO:0007669"/>
    <property type="project" value="UniProtKB-KW"/>
</dbReference>
<dbReference type="GO" id="GO:0032956">
    <property type="term" value="P:regulation of actin cytoskeleton organization"/>
    <property type="evidence" value="ECO:0000250"/>
    <property type="project" value="UniProtKB"/>
</dbReference>
<dbReference type="GO" id="GO:0051893">
    <property type="term" value="P:regulation of focal adhesion assembly"/>
    <property type="evidence" value="ECO:0000250"/>
    <property type="project" value="UniProtKB"/>
</dbReference>
<dbReference type="InterPro" id="IPR001614">
    <property type="entry name" value="Myelin_PLP"/>
</dbReference>
<dbReference type="InterPro" id="IPR018237">
    <property type="entry name" value="Myelin_PLP_CS"/>
</dbReference>
<dbReference type="PANTHER" id="PTHR11683">
    <property type="entry name" value="MYELIN PROTEOLIPID"/>
    <property type="match status" value="1"/>
</dbReference>
<dbReference type="PANTHER" id="PTHR11683:SF10">
    <property type="entry name" value="NEURONAL MEMBRANE GLYCOPROTEIN M6-B"/>
    <property type="match status" value="1"/>
</dbReference>
<dbReference type="Pfam" id="PF01275">
    <property type="entry name" value="Myelin_PLP"/>
    <property type="match status" value="1"/>
</dbReference>
<dbReference type="PRINTS" id="PR00214">
    <property type="entry name" value="MYELINPLP"/>
</dbReference>
<dbReference type="SMART" id="SM00002">
    <property type="entry name" value="PLP"/>
    <property type="match status" value="1"/>
</dbReference>
<dbReference type="PROSITE" id="PS00575">
    <property type="entry name" value="MYELIN_PLP_1"/>
    <property type="match status" value="1"/>
</dbReference>
<dbReference type="PROSITE" id="PS01004">
    <property type="entry name" value="MYELIN_PLP_2"/>
    <property type="match status" value="1"/>
</dbReference>
<protein>
    <recommendedName>
        <fullName>Neuronal membrane glycoprotein M6-b</fullName>
        <shortName>M6b</shortName>
    </recommendedName>
    <alternativeName>
        <fullName>Rhombencephalic expression protein-29 kDa</fullName>
        <shortName>Rhombex-29</shortName>
    </alternativeName>
</protein>
<proteinExistence type="evidence at protein level"/>
<comment type="function">
    <text>May be involved in neural development. Involved in regulation of osteoblast function and bone formation. Involved in matrix vesicle release by osteoblasts; this function seems to involve maintenance of the actin cytoskeleton. May be involved in cellular trafficking of SERT and thereby in regulation of serotonin uptake.</text>
</comment>
<comment type="subunit">
    <text evidence="5">Interacts with SERT.</text>
</comment>
<comment type="subcellular location">
    <subcellularLocation>
        <location evidence="1">Membrane</location>
        <topology evidence="1">Multi-pass membrane protein</topology>
    </subcellularLocation>
    <subcellularLocation>
        <location evidence="4">Cell membrane</location>
    </subcellularLocation>
    <text>Colocalizes with SERT at the plasma membrane.</text>
</comment>
<comment type="tissue specificity">
    <text evidence="4">Highly expressed in the ventral medullary surface, moderately in the cerebral cortex and cerebellum, poorly in lung and kidney, and not at all in heart, skeletal muscle, liver, stomach or stomach.</text>
</comment>
<comment type="developmental stage">
    <text evidence="4">In the developing brain, expression begins by at least embryonic day 20, increases gradually through postnatal day 2 and day 50 and decreases by postnatal day 300.</text>
</comment>
<comment type="induction">
    <text evidence="4">By hypercapnic stimulation (CO2 inhalation) in ventral medullary surface neurons but not in the cerebral cortex.</text>
</comment>
<comment type="similarity">
    <text evidence="6">Belongs to the myelin proteolipid protein family.</text>
</comment>
<gene>
    <name type="primary">Gpm6b</name>
    <name type="synonym">M6b</name>
    <name type="synonym">rhombex-29</name>
</gene>
<organism>
    <name type="scientific">Rattus norvegicus</name>
    <name type="common">Rat</name>
    <dbReference type="NCBI Taxonomy" id="10116"/>
    <lineage>
        <taxon>Eukaryota</taxon>
        <taxon>Metazoa</taxon>
        <taxon>Chordata</taxon>
        <taxon>Craniata</taxon>
        <taxon>Vertebrata</taxon>
        <taxon>Euteleostomi</taxon>
        <taxon>Mammalia</taxon>
        <taxon>Eutheria</taxon>
        <taxon>Euarchontoglires</taxon>
        <taxon>Glires</taxon>
        <taxon>Rodentia</taxon>
        <taxon>Myomorpha</taxon>
        <taxon>Muroidea</taxon>
        <taxon>Muridae</taxon>
        <taxon>Murinae</taxon>
        <taxon>Rattus</taxon>
    </lineage>
</organism>
<reference key="1">
    <citation type="journal article" date="2000" name="J. Neurosci. Res.">
        <title>Rhombex-29, a novel gene of the PLP/DM20-M6 family cloned from rat medulla oblongata by differential display.</title>
        <authorList>
            <person name="Shimokawa N."/>
            <person name="Miura M."/>
        </authorList>
    </citation>
    <scope>NUCLEOTIDE SEQUENCE [MRNA]</scope>
    <scope>TISSUE SPECIFICITY</scope>
    <scope>SUBCELLULAR LOCATION</scope>
    <scope>INDUCTION</scope>
    <scope>DEVELOPMENTAL STAGE</scope>
    <source>
        <strain>Wistar</strain>
        <tissue>Brain</tissue>
    </source>
</reference>
<reference key="2">
    <citation type="journal article" date="2009" name="J. Mol. Neurosci.">
        <title>Membrane glycoprotein M6B interacts with the human serotonin transporter.</title>
        <authorList>
            <person name="Fjorback A.W."/>
            <person name="Muller H.K."/>
            <person name="Wiborg O."/>
        </authorList>
    </citation>
    <scope>INTERACTION WITH SERT</scope>
</reference>
<evidence type="ECO:0000250" key="1"/>
<evidence type="ECO:0000250" key="2">
    <source>
        <dbReference type="UniProtKB" id="P35803"/>
    </source>
</evidence>
<evidence type="ECO:0000255" key="3"/>
<evidence type="ECO:0000269" key="4">
    <source>
    </source>
</evidence>
<evidence type="ECO:0000269" key="5">
    <source>
    </source>
</evidence>
<evidence type="ECO:0000305" key="6"/>
<sequence>MKPAMETAAEENTEQSQERKGCFECCIKCLGGVPYASLVATILCFSGVALFCGCGHVALAGTVAILEQHFSTNTSDHALLSEVIQLMQYVIYGIASFFFLYGIILLAEGFYTTSAVKELHGEFKTTACGRCISGMFVFLTYVLGVAWLGVFGFSAVPVFMFYNIWSTCEVIKSPQSNGTSGVEQICVDVRQYGIIPWNAFPGKICGSALENICNTNEFYMSYHLFIVACAGAGATVIALLIYMMATTYNYAVLKFKSREDCCPKF</sequence>
<keyword id="KW-1003">Cell membrane</keyword>
<keyword id="KW-0217">Developmental protein</keyword>
<keyword id="KW-0221">Differentiation</keyword>
<keyword id="KW-0325">Glycoprotein</keyword>
<keyword id="KW-0472">Membrane</keyword>
<keyword id="KW-0524">Neurogenesis</keyword>
<keyword id="KW-0892">Osteogenesis</keyword>
<keyword id="KW-0597">Phosphoprotein</keyword>
<keyword id="KW-0653">Protein transport</keyword>
<keyword id="KW-1185">Reference proteome</keyword>
<keyword id="KW-0812">Transmembrane</keyword>
<keyword id="KW-1133">Transmembrane helix</keyword>
<keyword id="KW-0813">Transport</keyword>
<feature type="chain" id="PRO_0000418017" description="Neuronal membrane glycoprotein M6-b">
    <location>
        <begin position="1"/>
        <end position="265"/>
    </location>
</feature>
<feature type="transmembrane region" description="Helical" evidence="3">
    <location>
        <begin position="31"/>
        <end position="51"/>
    </location>
</feature>
<feature type="transmembrane region" description="Helical" evidence="3">
    <location>
        <begin position="90"/>
        <end position="110"/>
    </location>
</feature>
<feature type="transmembrane region" description="Helical" evidence="3">
    <location>
        <begin position="136"/>
        <end position="156"/>
    </location>
</feature>
<feature type="transmembrane region" description="Helical" evidence="3">
    <location>
        <begin position="224"/>
        <end position="244"/>
    </location>
</feature>
<feature type="modified residue" description="Phosphoserine" evidence="2">
    <location>
        <position position="257"/>
    </location>
</feature>
<feature type="glycosylation site" description="N-linked (GlcNAc...) asparagine" evidence="3">
    <location>
        <position position="73"/>
    </location>
</feature>
<feature type="glycosylation site" description="N-linked (GlcNAc...) asparagine" evidence="3">
    <location>
        <position position="177"/>
    </location>
</feature>
<name>GPM6B_RAT</name>
<accession>Q9JJK1</accession>